<protein>
    <recommendedName>
        <fullName>Acylphosphatase</fullName>
        <ecNumber>3.6.1.7</ecNumber>
    </recommendedName>
    <alternativeName>
        <fullName>Acylphosphate phosphohydrolase</fullName>
    </alternativeName>
</protein>
<feature type="chain" id="PRO_0000326866" description="Acylphosphatase">
    <location>
        <begin position="1"/>
        <end position="95"/>
    </location>
</feature>
<feature type="domain" description="Acylphosphatase-like" evidence="1">
    <location>
        <begin position="5"/>
        <end position="93"/>
    </location>
</feature>
<feature type="active site" evidence="1">
    <location>
        <position position="20"/>
    </location>
</feature>
<feature type="active site" evidence="1">
    <location>
        <position position="38"/>
    </location>
</feature>
<gene>
    <name type="primary">acyP</name>
    <name type="ordered locus">Pars_0300</name>
</gene>
<reference key="1">
    <citation type="submission" date="2007-04" db="EMBL/GenBank/DDBJ databases">
        <title>Complete sequence of Pyrobaculum arsenaticum DSM 13514.</title>
        <authorList>
            <consortium name="US DOE Joint Genome Institute"/>
            <person name="Copeland A."/>
            <person name="Lucas S."/>
            <person name="Lapidus A."/>
            <person name="Barry K."/>
            <person name="Glavina del Rio T."/>
            <person name="Dalin E."/>
            <person name="Tice H."/>
            <person name="Pitluck S."/>
            <person name="Chain P."/>
            <person name="Malfatti S."/>
            <person name="Shin M."/>
            <person name="Vergez L."/>
            <person name="Schmutz J."/>
            <person name="Larimer F."/>
            <person name="Land M."/>
            <person name="Hauser L."/>
            <person name="Kyrpides N."/>
            <person name="Mikhailova N."/>
            <person name="Cozen A.E."/>
            <person name="Fitz-Gibbon S.T."/>
            <person name="House C.H."/>
            <person name="Saltikov C."/>
            <person name="Lowe T.M."/>
            <person name="Richardson P."/>
        </authorList>
    </citation>
    <scope>NUCLEOTIDE SEQUENCE [LARGE SCALE GENOMIC DNA]</scope>
    <source>
        <strain>ATCC 700994 / DSM 13514 / JCM 11321 / PZ6</strain>
    </source>
</reference>
<keyword id="KW-0378">Hydrolase</keyword>
<name>ACYP_PYRAR</name>
<evidence type="ECO:0000255" key="1">
    <source>
        <dbReference type="PROSITE-ProRule" id="PRU00520"/>
    </source>
</evidence>
<evidence type="ECO:0000305" key="2"/>
<proteinExistence type="inferred from homology"/>
<accession>A4WHP6</accession>
<comment type="catalytic activity">
    <reaction>
        <text>an acyl phosphate + H2O = a carboxylate + phosphate + H(+)</text>
        <dbReference type="Rhea" id="RHEA:14965"/>
        <dbReference type="ChEBI" id="CHEBI:15377"/>
        <dbReference type="ChEBI" id="CHEBI:15378"/>
        <dbReference type="ChEBI" id="CHEBI:29067"/>
        <dbReference type="ChEBI" id="CHEBI:43474"/>
        <dbReference type="ChEBI" id="CHEBI:59918"/>
        <dbReference type="EC" id="3.6.1.7"/>
    </reaction>
</comment>
<comment type="similarity">
    <text evidence="2">Belongs to the acylphosphatase family.</text>
</comment>
<organism>
    <name type="scientific">Pyrobaculum arsenaticum (strain DSM 13514 / JCM 11321 / PZ6)</name>
    <dbReference type="NCBI Taxonomy" id="340102"/>
    <lineage>
        <taxon>Archaea</taxon>
        <taxon>Thermoproteota</taxon>
        <taxon>Thermoprotei</taxon>
        <taxon>Thermoproteales</taxon>
        <taxon>Thermoproteaceae</taxon>
        <taxon>Pyrobaculum</taxon>
    </lineage>
</organism>
<sequence length="95" mass="11019">MEMARAHLFIRGKVQGVFFRQSMKEVATRNGVRGWVRNRSDGRTVEAVLEGPRDAVLKVIEWARVGPPGARVEDVEVRWEEYKGEFQDFRILPTF</sequence>
<dbReference type="EC" id="3.6.1.7"/>
<dbReference type="EMBL" id="CP000660">
    <property type="protein sequence ID" value="ABP49913.1"/>
    <property type="molecule type" value="Genomic_DNA"/>
</dbReference>
<dbReference type="SMR" id="A4WHP6"/>
<dbReference type="STRING" id="340102.Pars_0300"/>
<dbReference type="KEGG" id="pas:Pars_0300"/>
<dbReference type="HOGENOM" id="CLU_141932_3_2_2"/>
<dbReference type="OrthoDB" id="6643at2157"/>
<dbReference type="PhylomeDB" id="A4WHP6"/>
<dbReference type="Proteomes" id="UP000001567">
    <property type="component" value="Chromosome"/>
</dbReference>
<dbReference type="GO" id="GO:0003998">
    <property type="term" value="F:acylphosphatase activity"/>
    <property type="evidence" value="ECO:0007669"/>
    <property type="project" value="UniProtKB-EC"/>
</dbReference>
<dbReference type="FunFam" id="3.30.70.100:FF:000012">
    <property type="entry name" value="Acylphosphatase"/>
    <property type="match status" value="1"/>
</dbReference>
<dbReference type="Gene3D" id="3.30.70.100">
    <property type="match status" value="1"/>
</dbReference>
<dbReference type="InterPro" id="IPR020456">
    <property type="entry name" value="Acylphosphatase"/>
</dbReference>
<dbReference type="InterPro" id="IPR001792">
    <property type="entry name" value="Acylphosphatase-like_dom"/>
</dbReference>
<dbReference type="InterPro" id="IPR036046">
    <property type="entry name" value="Acylphosphatase-like_dom_sf"/>
</dbReference>
<dbReference type="InterPro" id="IPR017968">
    <property type="entry name" value="Acylphosphatase_CS"/>
</dbReference>
<dbReference type="PANTHER" id="PTHR47268">
    <property type="entry name" value="ACYLPHOSPHATASE"/>
    <property type="match status" value="1"/>
</dbReference>
<dbReference type="PANTHER" id="PTHR47268:SF4">
    <property type="entry name" value="ACYLPHOSPHATASE"/>
    <property type="match status" value="1"/>
</dbReference>
<dbReference type="Pfam" id="PF00708">
    <property type="entry name" value="Acylphosphatase"/>
    <property type="match status" value="1"/>
</dbReference>
<dbReference type="SUPFAM" id="SSF54975">
    <property type="entry name" value="Acylphosphatase/BLUF domain-like"/>
    <property type="match status" value="1"/>
</dbReference>
<dbReference type="PROSITE" id="PS00150">
    <property type="entry name" value="ACYLPHOSPHATASE_1"/>
    <property type="match status" value="1"/>
</dbReference>
<dbReference type="PROSITE" id="PS51160">
    <property type="entry name" value="ACYLPHOSPHATASE_3"/>
    <property type="match status" value="1"/>
</dbReference>